<feature type="chain" id="PRO_0000377193" description="tRNA dimethylallyltransferase">
    <location>
        <begin position="1"/>
        <end position="288"/>
    </location>
</feature>
<feature type="binding site" evidence="1">
    <location>
        <begin position="17"/>
        <end position="24"/>
    </location>
    <ligand>
        <name>ATP</name>
        <dbReference type="ChEBI" id="CHEBI:30616"/>
    </ligand>
</feature>
<feature type="binding site" evidence="1">
    <location>
        <begin position="19"/>
        <end position="24"/>
    </location>
    <ligand>
        <name>substrate</name>
    </ligand>
</feature>
<feature type="site" description="Interaction with substrate tRNA" evidence="1">
    <location>
        <position position="102"/>
    </location>
</feature>
<dbReference type="EC" id="2.5.1.75" evidence="1"/>
<dbReference type="EMBL" id="CP000264">
    <property type="protein sequence ID" value="ABD55378.1"/>
    <property type="molecule type" value="Genomic_DNA"/>
</dbReference>
<dbReference type="RefSeq" id="WP_011455582.1">
    <property type="nucleotide sequence ID" value="NC_007802.1"/>
</dbReference>
<dbReference type="SMR" id="Q28PI4"/>
<dbReference type="STRING" id="290400.Jann_2461"/>
<dbReference type="KEGG" id="jan:Jann_2461"/>
<dbReference type="eggNOG" id="COG0324">
    <property type="taxonomic scope" value="Bacteria"/>
</dbReference>
<dbReference type="HOGENOM" id="CLU_032616_0_1_5"/>
<dbReference type="OrthoDB" id="9776390at2"/>
<dbReference type="Proteomes" id="UP000008326">
    <property type="component" value="Chromosome"/>
</dbReference>
<dbReference type="GO" id="GO:0005524">
    <property type="term" value="F:ATP binding"/>
    <property type="evidence" value="ECO:0007669"/>
    <property type="project" value="UniProtKB-UniRule"/>
</dbReference>
<dbReference type="GO" id="GO:0052381">
    <property type="term" value="F:tRNA dimethylallyltransferase activity"/>
    <property type="evidence" value="ECO:0007669"/>
    <property type="project" value="UniProtKB-UniRule"/>
</dbReference>
<dbReference type="GO" id="GO:0006400">
    <property type="term" value="P:tRNA modification"/>
    <property type="evidence" value="ECO:0007669"/>
    <property type="project" value="TreeGrafter"/>
</dbReference>
<dbReference type="Gene3D" id="1.10.20.140">
    <property type="match status" value="1"/>
</dbReference>
<dbReference type="Gene3D" id="3.40.50.300">
    <property type="entry name" value="P-loop containing nucleotide triphosphate hydrolases"/>
    <property type="match status" value="1"/>
</dbReference>
<dbReference type="HAMAP" id="MF_00185">
    <property type="entry name" value="IPP_trans"/>
    <property type="match status" value="1"/>
</dbReference>
<dbReference type="InterPro" id="IPR039657">
    <property type="entry name" value="Dimethylallyltransferase"/>
</dbReference>
<dbReference type="InterPro" id="IPR018022">
    <property type="entry name" value="IPT"/>
</dbReference>
<dbReference type="InterPro" id="IPR027417">
    <property type="entry name" value="P-loop_NTPase"/>
</dbReference>
<dbReference type="NCBIfam" id="TIGR00174">
    <property type="entry name" value="miaA"/>
    <property type="match status" value="1"/>
</dbReference>
<dbReference type="PANTHER" id="PTHR11088">
    <property type="entry name" value="TRNA DIMETHYLALLYLTRANSFERASE"/>
    <property type="match status" value="1"/>
</dbReference>
<dbReference type="PANTHER" id="PTHR11088:SF60">
    <property type="entry name" value="TRNA DIMETHYLALLYLTRANSFERASE"/>
    <property type="match status" value="1"/>
</dbReference>
<dbReference type="Pfam" id="PF01715">
    <property type="entry name" value="IPPT"/>
    <property type="match status" value="1"/>
</dbReference>
<dbReference type="SUPFAM" id="SSF52540">
    <property type="entry name" value="P-loop containing nucleoside triphosphate hydrolases"/>
    <property type="match status" value="2"/>
</dbReference>
<reference key="1">
    <citation type="submission" date="2006-02" db="EMBL/GenBank/DDBJ databases">
        <title>Complete sequence of chromosome of Jannaschia sp. CCS1.</title>
        <authorList>
            <consortium name="US DOE Joint Genome Institute"/>
            <person name="Copeland A."/>
            <person name="Lucas S."/>
            <person name="Lapidus A."/>
            <person name="Barry K."/>
            <person name="Detter J.C."/>
            <person name="Glavina del Rio T."/>
            <person name="Hammon N."/>
            <person name="Israni S."/>
            <person name="Pitluck S."/>
            <person name="Brettin T."/>
            <person name="Bruce D."/>
            <person name="Han C."/>
            <person name="Tapia R."/>
            <person name="Gilna P."/>
            <person name="Chertkov O."/>
            <person name="Saunders E."/>
            <person name="Schmutz J."/>
            <person name="Larimer F."/>
            <person name="Land M."/>
            <person name="Kyrpides N."/>
            <person name="Lykidis A."/>
            <person name="Moran M.A."/>
            <person name="Belas R."/>
            <person name="Ye W."/>
            <person name="Buchan A."/>
            <person name="Gonzalez J.M."/>
            <person name="Schell M.A."/>
            <person name="Richardson P."/>
        </authorList>
    </citation>
    <scope>NUCLEOTIDE SEQUENCE [LARGE SCALE GENOMIC DNA]</scope>
    <source>
        <strain>CCS1</strain>
    </source>
</reference>
<keyword id="KW-0067">ATP-binding</keyword>
<keyword id="KW-0460">Magnesium</keyword>
<keyword id="KW-0547">Nucleotide-binding</keyword>
<keyword id="KW-1185">Reference proteome</keyword>
<keyword id="KW-0808">Transferase</keyword>
<keyword id="KW-0819">tRNA processing</keyword>
<evidence type="ECO:0000255" key="1">
    <source>
        <dbReference type="HAMAP-Rule" id="MF_00185"/>
    </source>
</evidence>
<proteinExistence type="inferred from homology"/>
<gene>
    <name evidence="1" type="primary">miaA</name>
    <name type="ordered locus">Jann_2461</name>
</gene>
<organism>
    <name type="scientific">Jannaschia sp. (strain CCS1)</name>
    <dbReference type="NCBI Taxonomy" id="290400"/>
    <lineage>
        <taxon>Bacteria</taxon>
        <taxon>Pseudomonadati</taxon>
        <taxon>Pseudomonadota</taxon>
        <taxon>Alphaproteobacteria</taxon>
        <taxon>Rhodobacterales</taxon>
        <taxon>Roseobacteraceae</taxon>
        <taxon>Jannaschia</taxon>
    </lineage>
</organism>
<sequence>MININNINPEKPVLIVGPTASGKTSLAIAIAQAQGRVVVNADALQVYDGWRVLTARPTPEEEDAVPHHLYGHVPFTAHYDVGQWLQDLTPFLAQNPVIVGGTGLYFRALTQGLADIPAIPPDIRAEADARSHTQRLADLHEGDPALVARIDCDNPMRVQRGWEVLRATGRPLSAWQDETPPPLLPLGNTTPLALMPDRDWLNARIAQRFDQMLNEGALDEARANLPRWSSAGGAAKAIGAPELIAHLHGTLPLAAARDAAVTATRQYAKRQRSWQRSNTQAWQSVPLP</sequence>
<comment type="function">
    <text evidence="1">Catalyzes the transfer of a dimethylallyl group onto the adenine at position 37 in tRNAs that read codons beginning with uridine, leading to the formation of N6-(dimethylallyl)adenosine (i(6)A).</text>
</comment>
<comment type="catalytic activity">
    <reaction evidence="1">
        <text>adenosine(37) in tRNA + dimethylallyl diphosphate = N(6)-dimethylallyladenosine(37) in tRNA + diphosphate</text>
        <dbReference type="Rhea" id="RHEA:26482"/>
        <dbReference type="Rhea" id="RHEA-COMP:10162"/>
        <dbReference type="Rhea" id="RHEA-COMP:10375"/>
        <dbReference type="ChEBI" id="CHEBI:33019"/>
        <dbReference type="ChEBI" id="CHEBI:57623"/>
        <dbReference type="ChEBI" id="CHEBI:74411"/>
        <dbReference type="ChEBI" id="CHEBI:74415"/>
        <dbReference type="EC" id="2.5.1.75"/>
    </reaction>
</comment>
<comment type="cofactor">
    <cofactor evidence="1">
        <name>Mg(2+)</name>
        <dbReference type="ChEBI" id="CHEBI:18420"/>
    </cofactor>
</comment>
<comment type="subunit">
    <text evidence="1">Monomer.</text>
</comment>
<comment type="similarity">
    <text evidence="1">Belongs to the IPP transferase family.</text>
</comment>
<name>MIAA_JANSC</name>
<accession>Q28PI4</accession>
<protein>
    <recommendedName>
        <fullName evidence="1">tRNA dimethylallyltransferase</fullName>
        <ecNumber evidence="1">2.5.1.75</ecNumber>
    </recommendedName>
    <alternativeName>
        <fullName evidence="1">Dimethylallyl diphosphate:tRNA dimethylallyltransferase</fullName>
        <shortName evidence="1">DMAPP:tRNA dimethylallyltransferase</shortName>
        <shortName evidence="1">DMATase</shortName>
    </alternativeName>
    <alternativeName>
        <fullName evidence="1">Isopentenyl-diphosphate:tRNA isopentenyltransferase</fullName>
        <shortName evidence="1">IPP transferase</shortName>
        <shortName evidence="1">IPPT</shortName>
        <shortName evidence="1">IPTase</shortName>
    </alternativeName>
</protein>